<keyword id="KW-0004">4Fe-4S</keyword>
<keyword id="KW-0963">Cytoplasm</keyword>
<keyword id="KW-1015">Disulfide bond</keyword>
<keyword id="KW-0408">Iron</keyword>
<keyword id="KW-0411">Iron-sulfur</keyword>
<keyword id="KW-0479">Metal-binding</keyword>
<keyword id="KW-0489">Methyltransferase</keyword>
<keyword id="KW-1185">Reference proteome</keyword>
<keyword id="KW-0698">rRNA processing</keyword>
<keyword id="KW-0949">S-adenosyl-L-methionine</keyword>
<keyword id="KW-0808">Transferase</keyword>
<keyword id="KW-0819">tRNA processing</keyword>
<evidence type="ECO:0000255" key="1">
    <source>
        <dbReference type="HAMAP-Rule" id="MF_01849"/>
    </source>
</evidence>
<evidence type="ECO:0000255" key="2">
    <source>
        <dbReference type="PROSITE-ProRule" id="PRU01266"/>
    </source>
</evidence>
<organism>
    <name type="scientific">Synechococcus sp. (strain RCC307)</name>
    <dbReference type="NCBI Taxonomy" id="316278"/>
    <lineage>
        <taxon>Bacteria</taxon>
        <taxon>Bacillati</taxon>
        <taxon>Cyanobacteriota</taxon>
        <taxon>Cyanophyceae</taxon>
        <taxon>Synechococcales</taxon>
        <taxon>Synechococcaceae</taxon>
        <taxon>Synechococcus</taxon>
    </lineage>
</organism>
<feature type="chain" id="PRO_0000350488" description="Probable dual-specificity RNA methyltransferase RlmN">
    <location>
        <begin position="1"/>
        <end position="346"/>
    </location>
</feature>
<feature type="domain" description="Radical SAM core" evidence="2">
    <location>
        <begin position="96"/>
        <end position="330"/>
    </location>
</feature>
<feature type="active site" description="Proton acceptor" evidence="1">
    <location>
        <position position="90"/>
    </location>
</feature>
<feature type="active site" description="S-methylcysteine intermediate" evidence="1">
    <location>
        <position position="335"/>
    </location>
</feature>
<feature type="binding site" evidence="1">
    <location>
        <position position="110"/>
    </location>
    <ligand>
        <name>[4Fe-4S] cluster</name>
        <dbReference type="ChEBI" id="CHEBI:49883"/>
        <note>4Fe-4S-S-AdoMet</note>
    </ligand>
</feature>
<feature type="binding site" evidence="1">
    <location>
        <position position="114"/>
    </location>
    <ligand>
        <name>[4Fe-4S] cluster</name>
        <dbReference type="ChEBI" id="CHEBI:49883"/>
        <note>4Fe-4S-S-AdoMet</note>
    </ligand>
</feature>
<feature type="binding site" evidence="1">
    <location>
        <position position="117"/>
    </location>
    <ligand>
        <name>[4Fe-4S] cluster</name>
        <dbReference type="ChEBI" id="CHEBI:49883"/>
        <note>4Fe-4S-S-AdoMet</note>
    </ligand>
</feature>
<feature type="binding site" evidence="1">
    <location>
        <begin position="157"/>
        <end position="158"/>
    </location>
    <ligand>
        <name>S-adenosyl-L-methionine</name>
        <dbReference type="ChEBI" id="CHEBI:59789"/>
    </ligand>
</feature>
<feature type="binding site" evidence="1">
    <location>
        <position position="187"/>
    </location>
    <ligand>
        <name>S-adenosyl-L-methionine</name>
        <dbReference type="ChEBI" id="CHEBI:59789"/>
    </ligand>
</feature>
<feature type="binding site" evidence="1">
    <location>
        <begin position="216"/>
        <end position="218"/>
    </location>
    <ligand>
        <name>S-adenosyl-L-methionine</name>
        <dbReference type="ChEBI" id="CHEBI:59789"/>
    </ligand>
</feature>
<feature type="binding site" evidence="1">
    <location>
        <position position="292"/>
    </location>
    <ligand>
        <name>S-adenosyl-L-methionine</name>
        <dbReference type="ChEBI" id="CHEBI:59789"/>
    </ligand>
</feature>
<feature type="disulfide bond" description="(transient)" evidence="1">
    <location>
        <begin position="103"/>
        <end position="335"/>
    </location>
</feature>
<proteinExistence type="inferred from homology"/>
<reference key="1">
    <citation type="submission" date="2006-05" db="EMBL/GenBank/DDBJ databases">
        <authorList>
            <consortium name="Genoscope"/>
        </authorList>
    </citation>
    <scope>NUCLEOTIDE SEQUENCE [LARGE SCALE GENOMIC DNA]</scope>
    <source>
        <strain>RCC307</strain>
    </source>
</reference>
<sequence length="346" mass="38432">MALKALLGLSQAQLETWAKDQGLPPFRGRQLHDWLYAKGARHWHDITVLPAALRQQEPLPLGRSNELERHLAQDGTLKLLLATDDGLSLETVGIPTRDRLTVCVSSQVGCPMACRFCATGKEGLQRSLEPHEIVDQVLTVREVMQRRPSHVVFMGMGEPLLNSDHVLTAIDCLSRDLGMAMRQITVSTVGVPNTLPRLAELALERLGRAQFTLAVSLHAPDQALREELIPTARAYPYEQLLEDCRHYVAISGRRVSFEYILLGNLNDSPRQAQALAEQVRGFQSHVNLIPYNPIAEEEFQRPEPARVDAFAAALKQRGVAVSVRASRGLDQNAACGQLRRQRQGGR</sequence>
<accession>A5GVE8</accession>
<protein>
    <recommendedName>
        <fullName evidence="1">Probable dual-specificity RNA methyltransferase RlmN</fullName>
        <ecNumber evidence="1">2.1.1.192</ecNumber>
    </recommendedName>
    <alternativeName>
        <fullName evidence="1">23S rRNA (adenine(2503)-C(2))-methyltransferase</fullName>
    </alternativeName>
    <alternativeName>
        <fullName evidence="1">23S rRNA m2A2503 methyltransferase</fullName>
    </alternativeName>
    <alternativeName>
        <fullName evidence="1">Ribosomal RNA large subunit methyltransferase N</fullName>
    </alternativeName>
    <alternativeName>
        <fullName evidence="1">tRNA (adenine(37)-C(2))-methyltransferase</fullName>
    </alternativeName>
    <alternativeName>
        <fullName evidence="1">tRNA m2A37 methyltransferase</fullName>
    </alternativeName>
</protein>
<dbReference type="EC" id="2.1.1.192" evidence="1"/>
<dbReference type="EMBL" id="CT978603">
    <property type="protein sequence ID" value="CAK28857.1"/>
    <property type="molecule type" value="Genomic_DNA"/>
</dbReference>
<dbReference type="SMR" id="A5GVE8"/>
<dbReference type="STRING" id="316278.SynRCC307_1954"/>
<dbReference type="KEGG" id="syr:SynRCC307_1954"/>
<dbReference type="eggNOG" id="COG0820">
    <property type="taxonomic scope" value="Bacteria"/>
</dbReference>
<dbReference type="HOGENOM" id="CLU_029101_0_2_3"/>
<dbReference type="OrthoDB" id="9793973at2"/>
<dbReference type="Proteomes" id="UP000001115">
    <property type="component" value="Chromosome"/>
</dbReference>
<dbReference type="GO" id="GO:0005737">
    <property type="term" value="C:cytoplasm"/>
    <property type="evidence" value="ECO:0007669"/>
    <property type="project" value="UniProtKB-SubCell"/>
</dbReference>
<dbReference type="GO" id="GO:0051539">
    <property type="term" value="F:4 iron, 4 sulfur cluster binding"/>
    <property type="evidence" value="ECO:0007669"/>
    <property type="project" value="UniProtKB-UniRule"/>
</dbReference>
<dbReference type="GO" id="GO:0046872">
    <property type="term" value="F:metal ion binding"/>
    <property type="evidence" value="ECO:0007669"/>
    <property type="project" value="UniProtKB-KW"/>
</dbReference>
<dbReference type="GO" id="GO:0070040">
    <property type="term" value="F:rRNA (adenine(2503)-C2-)-methyltransferase activity"/>
    <property type="evidence" value="ECO:0007669"/>
    <property type="project" value="UniProtKB-UniRule"/>
</dbReference>
<dbReference type="GO" id="GO:0019843">
    <property type="term" value="F:rRNA binding"/>
    <property type="evidence" value="ECO:0007669"/>
    <property type="project" value="UniProtKB-UniRule"/>
</dbReference>
<dbReference type="GO" id="GO:0002935">
    <property type="term" value="F:tRNA (adenine(37)-C2)-methyltransferase activity"/>
    <property type="evidence" value="ECO:0007669"/>
    <property type="project" value="UniProtKB-UniRule"/>
</dbReference>
<dbReference type="GO" id="GO:0000049">
    <property type="term" value="F:tRNA binding"/>
    <property type="evidence" value="ECO:0007669"/>
    <property type="project" value="UniProtKB-UniRule"/>
</dbReference>
<dbReference type="GO" id="GO:0070475">
    <property type="term" value="P:rRNA base methylation"/>
    <property type="evidence" value="ECO:0007669"/>
    <property type="project" value="UniProtKB-UniRule"/>
</dbReference>
<dbReference type="GO" id="GO:0030488">
    <property type="term" value="P:tRNA methylation"/>
    <property type="evidence" value="ECO:0007669"/>
    <property type="project" value="UniProtKB-UniRule"/>
</dbReference>
<dbReference type="CDD" id="cd01335">
    <property type="entry name" value="Radical_SAM"/>
    <property type="match status" value="1"/>
</dbReference>
<dbReference type="FunFam" id="3.20.20.70:FF:000014">
    <property type="entry name" value="Probable dual-specificity RNA methyltransferase RlmN"/>
    <property type="match status" value="1"/>
</dbReference>
<dbReference type="Gene3D" id="1.10.150.530">
    <property type="match status" value="1"/>
</dbReference>
<dbReference type="Gene3D" id="3.20.20.70">
    <property type="entry name" value="Aldolase class I"/>
    <property type="match status" value="1"/>
</dbReference>
<dbReference type="HAMAP" id="MF_01849">
    <property type="entry name" value="RNA_methyltr_RlmN"/>
    <property type="match status" value="1"/>
</dbReference>
<dbReference type="InterPro" id="IPR013785">
    <property type="entry name" value="Aldolase_TIM"/>
</dbReference>
<dbReference type="InterPro" id="IPR040072">
    <property type="entry name" value="Methyltransferase_A"/>
</dbReference>
<dbReference type="InterPro" id="IPR048641">
    <property type="entry name" value="RlmN_N"/>
</dbReference>
<dbReference type="InterPro" id="IPR027492">
    <property type="entry name" value="RNA_MTrfase_RlmN"/>
</dbReference>
<dbReference type="InterPro" id="IPR004383">
    <property type="entry name" value="rRNA_lsu_MTrfase_RlmN/Cfr"/>
</dbReference>
<dbReference type="InterPro" id="IPR007197">
    <property type="entry name" value="rSAM"/>
</dbReference>
<dbReference type="NCBIfam" id="TIGR00048">
    <property type="entry name" value="rRNA_mod_RlmN"/>
    <property type="match status" value="1"/>
</dbReference>
<dbReference type="PANTHER" id="PTHR30544">
    <property type="entry name" value="23S RRNA METHYLTRANSFERASE"/>
    <property type="match status" value="1"/>
</dbReference>
<dbReference type="PANTHER" id="PTHR30544:SF5">
    <property type="entry name" value="RADICAL SAM CORE DOMAIN-CONTAINING PROTEIN"/>
    <property type="match status" value="1"/>
</dbReference>
<dbReference type="Pfam" id="PF04055">
    <property type="entry name" value="Radical_SAM"/>
    <property type="match status" value="1"/>
</dbReference>
<dbReference type="Pfam" id="PF21016">
    <property type="entry name" value="RlmN_N"/>
    <property type="match status" value="1"/>
</dbReference>
<dbReference type="PIRSF" id="PIRSF006004">
    <property type="entry name" value="CHP00048"/>
    <property type="match status" value="1"/>
</dbReference>
<dbReference type="SFLD" id="SFLDF00275">
    <property type="entry name" value="adenosine_C2_methyltransferase"/>
    <property type="match status" value="1"/>
</dbReference>
<dbReference type="SFLD" id="SFLDS00029">
    <property type="entry name" value="Radical_SAM"/>
    <property type="match status" value="1"/>
</dbReference>
<dbReference type="SUPFAM" id="SSF102114">
    <property type="entry name" value="Radical SAM enzymes"/>
    <property type="match status" value="1"/>
</dbReference>
<dbReference type="PROSITE" id="PS51918">
    <property type="entry name" value="RADICAL_SAM"/>
    <property type="match status" value="1"/>
</dbReference>
<name>RLMN_SYNR3</name>
<gene>
    <name evidence="1" type="primary">rlmN</name>
    <name type="ordered locus">SynRCC307_1954</name>
</gene>
<comment type="function">
    <text evidence="1">Specifically methylates position 2 of adenine 2503 in 23S rRNA and position 2 of adenine 37 in tRNAs.</text>
</comment>
<comment type="catalytic activity">
    <reaction evidence="1">
        <text>adenosine(2503) in 23S rRNA + 2 reduced [2Fe-2S]-[ferredoxin] + 2 S-adenosyl-L-methionine = 2-methyladenosine(2503) in 23S rRNA + 5'-deoxyadenosine + L-methionine + 2 oxidized [2Fe-2S]-[ferredoxin] + S-adenosyl-L-homocysteine</text>
        <dbReference type="Rhea" id="RHEA:42916"/>
        <dbReference type="Rhea" id="RHEA-COMP:10000"/>
        <dbReference type="Rhea" id="RHEA-COMP:10001"/>
        <dbReference type="Rhea" id="RHEA-COMP:10152"/>
        <dbReference type="Rhea" id="RHEA-COMP:10282"/>
        <dbReference type="ChEBI" id="CHEBI:17319"/>
        <dbReference type="ChEBI" id="CHEBI:33737"/>
        <dbReference type="ChEBI" id="CHEBI:33738"/>
        <dbReference type="ChEBI" id="CHEBI:57844"/>
        <dbReference type="ChEBI" id="CHEBI:57856"/>
        <dbReference type="ChEBI" id="CHEBI:59789"/>
        <dbReference type="ChEBI" id="CHEBI:74411"/>
        <dbReference type="ChEBI" id="CHEBI:74497"/>
        <dbReference type="EC" id="2.1.1.192"/>
    </reaction>
</comment>
<comment type="catalytic activity">
    <reaction evidence="1">
        <text>adenosine(37) in tRNA + 2 reduced [2Fe-2S]-[ferredoxin] + 2 S-adenosyl-L-methionine = 2-methyladenosine(37) in tRNA + 5'-deoxyadenosine + L-methionine + 2 oxidized [2Fe-2S]-[ferredoxin] + S-adenosyl-L-homocysteine</text>
        <dbReference type="Rhea" id="RHEA:43332"/>
        <dbReference type="Rhea" id="RHEA-COMP:10000"/>
        <dbReference type="Rhea" id="RHEA-COMP:10001"/>
        <dbReference type="Rhea" id="RHEA-COMP:10162"/>
        <dbReference type="Rhea" id="RHEA-COMP:10485"/>
        <dbReference type="ChEBI" id="CHEBI:17319"/>
        <dbReference type="ChEBI" id="CHEBI:33737"/>
        <dbReference type="ChEBI" id="CHEBI:33738"/>
        <dbReference type="ChEBI" id="CHEBI:57844"/>
        <dbReference type="ChEBI" id="CHEBI:57856"/>
        <dbReference type="ChEBI" id="CHEBI:59789"/>
        <dbReference type="ChEBI" id="CHEBI:74411"/>
        <dbReference type="ChEBI" id="CHEBI:74497"/>
        <dbReference type="EC" id="2.1.1.192"/>
    </reaction>
</comment>
<comment type="cofactor">
    <cofactor evidence="1">
        <name>[4Fe-4S] cluster</name>
        <dbReference type="ChEBI" id="CHEBI:49883"/>
    </cofactor>
    <text evidence="1">Binds 1 [4Fe-4S] cluster. The cluster is coordinated with 3 cysteines and an exchangeable S-adenosyl-L-methionine.</text>
</comment>
<comment type="subcellular location">
    <subcellularLocation>
        <location evidence="1">Cytoplasm</location>
    </subcellularLocation>
</comment>
<comment type="miscellaneous">
    <text evidence="1">Reaction proceeds by a ping-pong mechanism involving intermediate methylation of a conserved cysteine residue.</text>
</comment>
<comment type="similarity">
    <text evidence="1">Belongs to the radical SAM superfamily. RlmN family.</text>
</comment>